<evidence type="ECO:0000255" key="1">
    <source>
        <dbReference type="HAMAP-Rule" id="MF_00407"/>
    </source>
</evidence>
<gene>
    <name evidence="1" type="primary">lig</name>
    <name type="ordered locus">ROP_13440</name>
</gene>
<feature type="chain" id="PRO_1000134731" description="Probable DNA ligase">
    <location>
        <begin position="1"/>
        <end position="503"/>
    </location>
</feature>
<feature type="active site" description="N6-AMP-lysine intermediate" evidence="1">
    <location>
        <position position="212"/>
    </location>
</feature>
<feature type="binding site" evidence="1">
    <location>
        <position position="210"/>
    </location>
    <ligand>
        <name>ATP</name>
        <dbReference type="ChEBI" id="CHEBI:30616"/>
    </ligand>
</feature>
<feature type="binding site" evidence="1">
    <location>
        <position position="217"/>
    </location>
    <ligand>
        <name>ATP</name>
        <dbReference type="ChEBI" id="CHEBI:30616"/>
    </ligand>
</feature>
<feature type="binding site" evidence="1">
    <location>
        <position position="232"/>
    </location>
    <ligand>
        <name>ATP</name>
        <dbReference type="ChEBI" id="CHEBI:30616"/>
    </ligand>
</feature>
<feature type="binding site" evidence="1">
    <location>
        <position position="261"/>
    </location>
    <ligand>
        <name>ATP</name>
        <dbReference type="ChEBI" id="CHEBI:30616"/>
    </ligand>
</feature>
<feature type="binding site" evidence="1">
    <location>
        <position position="296"/>
    </location>
    <ligand>
        <name>ATP</name>
        <dbReference type="ChEBI" id="CHEBI:30616"/>
    </ligand>
</feature>
<feature type="binding site" evidence="1">
    <location>
        <position position="367"/>
    </location>
    <ligand>
        <name>ATP</name>
        <dbReference type="ChEBI" id="CHEBI:30616"/>
    </ligand>
</feature>
<feature type="binding site" evidence="1">
    <location>
        <position position="373"/>
    </location>
    <ligand>
        <name>ATP</name>
        <dbReference type="ChEBI" id="CHEBI:30616"/>
    </ligand>
</feature>
<comment type="function">
    <text evidence="1">DNA ligase that seals nicks in double-stranded DNA during DNA replication, DNA recombination and DNA repair.</text>
</comment>
<comment type="catalytic activity">
    <reaction evidence="1">
        <text>ATP + (deoxyribonucleotide)n-3'-hydroxyl + 5'-phospho-(deoxyribonucleotide)m = (deoxyribonucleotide)n+m + AMP + diphosphate.</text>
        <dbReference type="EC" id="6.5.1.1"/>
    </reaction>
</comment>
<comment type="cofactor">
    <cofactor evidence="1">
        <name>Mg(2+)</name>
        <dbReference type="ChEBI" id="CHEBI:18420"/>
    </cofactor>
</comment>
<comment type="similarity">
    <text evidence="1">Belongs to the ATP-dependent DNA ligase family.</text>
</comment>
<reference key="1">
    <citation type="submission" date="2009-03" db="EMBL/GenBank/DDBJ databases">
        <title>Comparison of the complete genome sequences of Rhodococcus erythropolis PR4 and Rhodococcus opacus B4.</title>
        <authorList>
            <person name="Takarada H."/>
            <person name="Sekine M."/>
            <person name="Hosoyama A."/>
            <person name="Yamada R."/>
            <person name="Fujisawa T."/>
            <person name="Omata S."/>
            <person name="Shimizu A."/>
            <person name="Tsukatani N."/>
            <person name="Tanikawa S."/>
            <person name="Fujita N."/>
            <person name="Harayama S."/>
        </authorList>
    </citation>
    <scope>NUCLEOTIDE SEQUENCE [LARGE SCALE GENOMIC DNA]</scope>
    <source>
        <strain>B4</strain>
    </source>
</reference>
<accession>C1AX87</accession>
<organism>
    <name type="scientific">Rhodococcus opacus (strain B4)</name>
    <dbReference type="NCBI Taxonomy" id="632772"/>
    <lineage>
        <taxon>Bacteria</taxon>
        <taxon>Bacillati</taxon>
        <taxon>Actinomycetota</taxon>
        <taxon>Actinomycetes</taxon>
        <taxon>Mycobacteriales</taxon>
        <taxon>Nocardiaceae</taxon>
        <taxon>Rhodococcus</taxon>
    </lineage>
</organism>
<proteinExistence type="inferred from homology"/>
<keyword id="KW-0067">ATP-binding</keyword>
<keyword id="KW-0131">Cell cycle</keyword>
<keyword id="KW-0132">Cell division</keyword>
<keyword id="KW-0227">DNA damage</keyword>
<keyword id="KW-0233">DNA recombination</keyword>
<keyword id="KW-0234">DNA repair</keyword>
<keyword id="KW-0235">DNA replication</keyword>
<keyword id="KW-0436">Ligase</keyword>
<keyword id="KW-0460">Magnesium</keyword>
<keyword id="KW-0479">Metal-binding</keyword>
<keyword id="KW-0547">Nucleotide-binding</keyword>
<protein>
    <recommendedName>
        <fullName evidence="1">Probable DNA ligase</fullName>
        <ecNumber evidence="1">6.5.1.1</ecNumber>
    </recommendedName>
    <alternativeName>
        <fullName evidence="1">Polydeoxyribonucleotide synthase [ATP]</fullName>
    </alternativeName>
</protein>
<name>DNLI_RHOOB</name>
<dbReference type="EC" id="6.5.1.1" evidence="1"/>
<dbReference type="EMBL" id="AP011115">
    <property type="protein sequence ID" value="BAH49591.1"/>
    <property type="molecule type" value="Genomic_DNA"/>
</dbReference>
<dbReference type="RefSeq" id="WP_012688563.1">
    <property type="nucleotide sequence ID" value="NC_012522.1"/>
</dbReference>
<dbReference type="SMR" id="C1AX87"/>
<dbReference type="STRING" id="632772.ROP_13440"/>
<dbReference type="KEGG" id="rop:ROP_13440"/>
<dbReference type="PATRIC" id="fig|632772.20.peg.1417"/>
<dbReference type="HOGENOM" id="CLU_005138_6_1_11"/>
<dbReference type="OrthoDB" id="3733803at2"/>
<dbReference type="Proteomes" id="UP000002212">
    <property type="component" value="Chromosome"/>
</dbReference>
<dbReference type="GO" id="GO:0005524">
    <property type="term" value="F:ATP binding"/>
    <property type="evidence" value="ECO:0007669"/>
    <property type="project" value="UniProtKB-UniRule"/>
</dbReference>
<dbReference type="GO" id="GO:0003677">
    <property type="term" value="F:DNA binding"/>
    <property type="evidence" value="ECO:0007669"/>
    <property type="project" value="InterPro"/>
</dbReference>
<dbReference type="GO" id="GO:0003910">
    <property type="term" value="F:DNA ligase (ATP) activity"/>
    <property type="evidence" value="ECO:0007669"/>
    <property type="project" value="UniProtKB-UniRule"/>
</dbReference>
<dbReference type="GO" id="GO:0046872">
    <property type="term" value="F:metal ion binding"/>
    <property type="evidence" value="ECO:0007669"/>
    <property type="project" value="UniProtKB-KW"/>
</dbReference>
<dbReference type="GO" id="GO:0051301">
    <property type="term" value="P:cell division"/>
    <property type="evidence" value="ECO:0007669"/>
    <property type="project" value="UniProtKB-KW"/>
</dbReference>
<dbReference type="GO" id="GO:0071897">
    <property type="term" value="P:DNA biosynthetic process"/>
    <property type="evidence" value="ECO:0007669"/>
    <property type="project" value="InterPro"/>
</dbReference>
<dbReference type="GO" id="GO:0006310">
    <property type="term" value="P:DNA recombination"/>
    <property type="evidence" value="ECO:0007669"/>
    <property type="project" value="UniProtKB-UniRule"/>
</dbReference>
<dbReference type="GO" id="GO:0006281">
    <property type="term" value="P:DNA repair"/>
    <property type="evidence" value="ECO:0007669"/>
    <property type="project" value="UniProtKB-UniRule"/>
</dbReference>
<dbReference type="GO" id="GO:0006260">
    <property type="term" value="P:DNA replication"/>
    <property type="evidence" value="ECO:0007669"/>
    <property type="project" value="UniProtKB-UniRule"/>
</dbReference>
<dbReference type="CDD" id="cd07901">
    <property type="entry name" value="Adenylation_DNA_ligase_Arch_LigB"/>
    <property type="match status" value="1"/>
</dbReference>
<dbReference type="Gene3D" id="1.10.3260.10">
    <property type="entry name" value="DNA ligase, ATP-dependent, N-terminal domain"/>
    <property type="match status" value="1"/>
</dbReference>
<dbReference type="Gene3D" id="3.30.470.30">
    <property type="entry name" value="DNA ligase/mRNA capping enzyme"/>
    <property type="match status" value="1"/>
</dbReference>
<dbReference type="Gene3D" id="2.40.50.140">
    <property type="entry name" value="Nucleic acid-binding proteins"/>
    <property type="match status" value="1"/>
</dbReference>
<dbReference type="HAMAP" id="MF_00407">
    <property type="entry name" value="DNA_ligase"/>
    <property type="match status" value="1"/>
</dbReference>
<dbReference type="InterPro" id="IPR050191">
    <property type="entry name" value="ATP-dep_DNA_ligase"/>
</dbReference>
<dbReference type="InterPro" id="IPR022865">
    <property type="entry name" value="DNA_ligae_ATP-dep_bac/arc"/>
</dbReference>
<dbReference type="InterPro" id="IPR000977">
    <property type="entry name" value="DNA_ligase_ATP-dep"/>
</dbReference>
<dbReference type="InterPro" id="IPR012309">
    <property type="entry name" value="DNA_ligase_ATP-dep_C"/>
</dbReference>
<dbReference type="InterPro" id="IPR012310">
    <property type="entry name" value="DNA_ligase_ATP-dep_cent"/>
</dbReference>
<dbReference type="InterPro" id="IPR016059">
    <property type="entry name" value="DNA_ligase_ATP-dep_CS"/>
</dbReference>
<dbReference type="InterPro" id="IPR012308">
    <property type="entry name" value="DNA_ligase_ATP-dep_N"/>
</dbReference>
<dbReference type="InterPro" id="IPR036599">
    <property type="entry name" value="DNA_ligase_N_sf"/>
</dbReference>
<dbReference type="InterPro" id="IPR012340">
    <property type="entry name" value="NA-bd_OB-fold"/>
</dbReference>
<dbReference type="NCBIfam" id="TIGR00574">
    <property type="entry name" value="dnl1"/>
    <property type="match status" value="1"/>
</dbReference>
<dbReference type="NCBIfam" id="NF002868">
    <property type="entry name" value="PRK03180.1"/>
    <property type="match status" value="1"/>
</dbReference>
<dbReference type="PANTHER" id="PTHR45674">
    <property type="entry name" value="DNA LIGASE 1/3 FAMILY MEMBER"/>
    <property type="match status" value="1"/>
</dbReference>
<dbReference type="PANTHER" id="PTHR45674:SF13">
    <property type="entry name" value="DNA LIGASE-RELATED"/>
    <property type="match status" value="1"/>
</dbReference>
<dbReference type="Pfam" id="PF04679">
    <property type="entry name" value="DNA_ligase_A_C"/>
    <property type="match status" value="1"/>
</dbReference>
<dbReference type="Pfam" id="PF01068">
    <property type="entry name" value="DNA_ligase_A_M"/>
    <property type="match status" value="1"/>
</dbReference>
<dbReference type="Pfam" id="PF04675">
    <property type="entry name" value="DNA_ligase_A_N"/>
    <property type="match status" value="1"/>
</dbReference>
<dbReference type="SUPFAM" id="SSF117018">
    <property type="entry name" value="ATP-dependent DNA ligase DNA-binding domain"/>
    <property type="match status" value="1"/>
</dbReference>
<dbReference type="SUPFAM" id="SSF56091">
    <property type="entry name" value="DNA ligase/mRNA capping enzyme, catalytic domain"/>
    <property type="match status" value="1"/>
</dbReference>
<dbReference type="SUPFAM" id="SSF50249">
    <property type="entry name" value="Nucleic acid-binding proteins"/>
    <property type="match status" value="1"/>
</dbReference>
<dbReference type="PROSITE" id="PS00697">
    <property type="entry name" value="DNA_LIGASE_A1"/>
    <property type="match status" value="1"/>
</dbReference>
<dbReference type="PROSITE" id="PS50160">
    <property type="entry name" value="DNA_LIGASE_A3"/>
    <property type="match status" value="1"/>
</dbReference>
<sequence>MLFSQIVATSRDVGATRSRKVKVATLREALTRLEQAEVEPVVAWLSGELRQGRIGIGWRTVADIPATPADVAAVTVSEVDGTISAVAEVSGSGSAARRRELLADLFARTTADERDFLLRLLTGDLRQGALEGVMTDAIAAAADLPIEPVRRAFMLSGRLPATAVAAFDGGVDALTAFRLEVGRPVRPMLASPAESLADAWSELGGDVSVEYKLDGARIQVHRNGDEVRIFTRTLREITGSVPELVALVARLPCTSAVFDGETLALTDSGRPRPFQETMSRFGAESARDLLLHPYFFDCLHLDGVDLLDSPLEERLKALERVAPQHRIPGLIRPDSEGAATHFDDALAAGHEGVMVKSLTAPYAAGRRGRAWQKVKPEHTLDLVVLGAEWGYGRRTGYLSNLHLGARDPDGGAPIMVGKTFKGLTDALLQWQTDEFPRHERARDDHTVYLHPDLVVEIELDGVQVSTRYPGGLALRFARVLRYRPDKTAADADTIDAVRSLLPG</sequence>